<protein>
    <recommendedName>
        <fullName evidence="1">Translation initiation factor IF-1</fullName>
    </recommendedName>
</protein>
<dbReference type="EMBL" id="AE016830">
    <property type="protein sequence ID" value="AAO80097.1"/>
    <property type="molecule type" value="Genomic_DNA"/>
</dbReference>
<dbReference type="RefSeq" id="NP_814026.1">
    <property type="nucleotide sequence ID" value="NC_004668.1"/>
</dbReference>
<dbReference type="RefSeq" id="WP_002356224.1">
    <property type="nucleotide sequence ID" value="NZ_KE136524.1"/>
</dbReference>
<dbReference type="SMR" id="Q839E2"/>
<dbReference type="STRING" id="226185.EF_0229"/>
<dbReference type="EnsemblBacteria" id="AAO80097">
    <property type="protein sequence ID" value="AAO80097"/>
    <property type="gene ID" value="EF_0229"/>
</dbReference>
<dbReference type="GeneID" id="60892723"/>
<dbReference type="KEGG" id="efa:EF0229"/>
<dbReference type="PATRIC" id="fig|226185.45.peg.38"/>
<dbReference type="eggNOG" id="COG0361">
    <property type="taxonomic scope" value="Bacteria"/>
</dbReference>
<dbReference type="HOGENOM" id="CLU_151267_1_0_9"/>
<dbReference type="PRO" id="PR:Q839E2"/>
<dbReference type="Proteomes" id="UP000001415">
    <property type="component" value="Chromosome"/>
</dbReference>
<dbReference type="GO" id="GO:0005829">
    <property type="term" value="C:cytosol"/>
    <property type="evidence" value="ECO:0007669"/>
    <property type="project" value="TreeGrafter"/>
</dbReference>
<dbReference type="GO" id="GO:0043022">
    <property type="term" value="F:ribosome binding"/>
    <property type="evidence" value="ECO:0007669"/>
    <property type="project" value="UniProtKB-UniRule"/>
</dbReference>
<dbReference type="GO" id="GO:0019843">
    <property type="term" value="F:rRNA binding"/>
    <property type="evidence" value="ECO:0007669"/>
    <property type="project" value="UniProtKB-UniRule"/>
</dbReference>
<dbReference type="GO" id="GO:0003743">
    <property type="term" value="F:translation initiation factor activity"/>
    <property type="evidence" value="ECO:0007669"/>
    <property type="project" value="UniProtKB-UniRule"/>
</dbReference>
<dbReference type="CDD" id="cd04451">
    <property type="entry name" value="S1_IF1"/>
    <property type="match status" value="1"/>
</dbReference>
<dbReference type="FunFam" id="2.40.50.140:FF:000002">
    <property type="entry name" value="Translation initiation factor IF-1"/>
    <property type="match status" value="1"/>
</dbReference>
<dbReference type="Gene3D" id="2.40.50.140">
    <property type="entry name" value="Nucleic acid-binding proteins"/>
    <property type="match status" value="1"/>
</dbReference>
<dbReference type="HAMAP" id="MF_00075">
    <property type="entry name" value="IF_1"/>
    <property type="match status" value="1"/>
</dbReference>
<dbReference type="InterPro" id="IPR012340">
    <property type="entry name" value="NA-bd_OB-fold"/>
</dbReference>
<dbReference type="InterPro" id="IPR006196">
    <property type="entry name" value="RNA-binding_domain_S1_IF1"/>
</dbReference>
<dbReference type="InterPro" id="IPR003029">
    <property type="entry name" value="S1_domain"/>
</dbReference>
<dbReference type="InterPro" id="IPR004368">
    <property type="entry name" value="TIF_IF1"/>
</dbReference>
<dbReference type="NCBIfam" id="TIGR00008">
    <property type="entry name" value="infA"/>
    <property type="match status" value="1"/>
</dbReference>
<dbReference type="PANTHER" id="PTHR33370">
    <property type="entry name" value="TRANSLATION INITIATION FACTOR IF-1, CHLOROPLASTIC"/>
    <property type="match status" value="1"/>
</dbReference>
<dbReference type="PANTHER" id="PTHR33370:SF1">
    <property type="entry name" value="TRANSLATION INITIATION FACTOR IF-1, CHLOROPLASTIC"/>
    <property type="match status" value="1"/>
</dbReference>
<dbReference type="Pfam" id="PF01176">
    <property type="entry name" value="eIF-1a"/>
    <property type="match status" value="1"/>
</dbReference>
<dbReference type="SMART" id="SM00316">
    <property type="entry name" value="S1"/>
    <property type="match status" value="1"/>
</dbReference>
<dbReference type="SUPFAM" id="SSF50249">
    <property type="entry name" value="Nucleic acid-binding proteins"/>
    <property type="match status" value="1"/>
</dbReference>
<dbReference type="PROSITE" id="PS50832">
    <property type="entry name" value="S1_IF1_TYPE"/>
    <property type="match status" value="1"/>
</dbReference>
<keyword id="KW-0963">Cytoplasm</keyword>
<keyword id="KW-0396">Initiation factor</keyword>
<keyword id="KW-0648">Protein biosynthesis</keyword>
<keyword id="KW-1185">Reference proteome</keyword>
<keyword id="KW-0694">RNA-binding</keyword>
<keyword id="KW-0699">rRNA-binding</keyword>
<sequence length="72" mass="8237">MAKEDMIEVEGTVVETLPNAMFKVELENGHQVLATVSGKIRMHYIRILPGDKVTVELSPYDLTRGRITYRFK</sequence>
<comment type="function">
    <text evidence="1">One of the essential components for the initiation of protein synthesis. Stabilizes the binding of IF-2 and IF-3 on the 30S subunit to which N-formylmethionyl-tRNA(fMet) subsequently binds. Helps modulate mRNA selection, yielding the 30S pre-initiation complex (PIC). Upon addition of the 50S ribosomal subunit IF-1, IF-2 and IF-3 are released leaving the mature 70S translation initiation complex.</text>
</comment>
<comment type="subunit">
    <text evidence="1">Component of the 30S ribosomal translation pre-initiation complex which assembles on the 30S ribosome in the order IF-2 and IF-3, IF-1 and N-formylmethionyl-tRNA(fMet); mRNA recruitment can occur at any time during PIC assembly.</text>
</comment>
<comment type="subcellular location">
    <subcellularLocation>
        <location evidence="1">Cytoplasm</location>
    </subcellularLocation>
</comment>
<comment type="similarity">
    <text evidence="1">Belongs to the IF-1 family.</text>
</comment>
<proteinExistence type="inferred from homology"/>
<evidence type="ECO:0000255" key="1">
    <source>
        <dbReference type="HAMAP-Rule" id="MF_00075"/>
    </source>
</evidence>
<reference key="1">
    <citation type="journal article" date="2003" name="Science">
        <title>Role of mobile DNA in the evolution of vancomycin-resistant Enterococcus faecalis.</title>
        <authorList>
            <person name="Paulsen I.T."/>
            <person name="Banerjei L."/>
            <person name="Myers G.S.A."/>
            <person name="Nelson K.E."/>
            <person name="Seshadri R."/>
            <person name="Read T.D."/>
            <person name="Fouts D.E."/>
            <person name="Eisen J.A."/>
            <person name="Gill S.R."/>
            <person name="Heidelberg J.F."/>
            <person name="Tettelin H."/>
            <person name="Dodson R.J."/>
            <person name="Umayam L.A."/>
            <person name="Brinkac L.M."/>
            <person name="Beanan M.J."/>
            <person name="Daugherty S.C."/>
            <person name="DeBoy R.T."/>
            <person name="Durkin S.A."/>
            <person name="Kolonay J.F."/>
            <person name="Madupu R."/>
            <person name="Nelson W.C."/>
            <person name="Vamathevan J.J."/>
            <person name="Tran B."/>
            <person name="Upton J."/>
            <person name="Hansen T."/>
            <person name="Shetty J."/>
            <person name="Khouri H.M."/>
            <person name="Utterback T.R."/>
            <person name="Radune D."/>
            <person name="Ketchum K.A."/>
            <person name="Dougherty B.A."/>
            <person name="Fraser C.M."/>
        </authorList>
    </citation>
    <scope>NUCLEOTIDE SEQUENCE [LARGE SCALE GENOMIC DNA]</scope>
    <source>
        <strain>ATCC 700802 / V583</strain>
    </source>
</reference>
<feature type="chain" id="PRO_0000095788" description="Translation initiation factor IF-1">
    <location>
        <begin position="1"/>
        <end position="72"/>
    </location>
</feature>
<feature type="domain" description="S1-like" evidence="1">
    <location>
        <begin position="1"/>
        <end position="72"/>
    </location>
</feature>
<name>IF1_ENTFA</name>
<gene>
    <name evidence="1" type="primary">infA</name>
    <name type="ordered locus">EF_0229</name>
</gene>
<accession>Q839E2</accession>
<organism>
    <name type="scientific">Enterococcus faecalis (strain ATCC 700802 / V583)</name>
    <dbReference type="NCBI Taxonomy" id="226185"/>
    <lineage>
        <taxon>Bacteria</taxon>
        <taxon>Bacillati</taxon>
        <taxon>Bacillota</taxon>
        <taxon>Bacilli</taxon>
        <taxon>Lactobacillales</taxon>
        <taxon>Enterococcaceae</taxon>
        <taxon>Enterococcus</taxon>
    </lineage>
</organism>